<reference key="1">
    <citation type="submission" date="2005-03" db="EMBL/GenBank/DDBJ databases">
        <title>Annotation of the Saccharomyces cerevisiae RM11-1a genome.</title>
        <authorList>
            <consortium name="The Broad Institute Genome Sequencing Platform"/>
            <person name="Birren B.W."/>
            <person name="Lander E.S."/>
            <person name="Galagan J.E."/>
            <person name="Nusbaum C."/>
            <person name="Devon K."/>
            <person name="Cuomo C."/>
            <person name="Jaffe D.B."/>
            <person name="Butler J."/>
            <person name="Alvarez P."/>
            <person name="Gnerre S."/>
            <person name="Grabherr M."/>
            <person name="Kleber M."/>
            <person name="Mauceli E.W."/>
            <person name="Brockman W."/>
            <person name="MacCallum I.A."/>
            <person name="Rounsley S."/>
            <person name="Young S.K."/>
            <person name="LaButti K."/>
            <person name="Pushparaj V."/>
            <person name="DeCaprio D."/>
            <person name="Crawford M."/>
            <person name="Koehrsen M."/>
            <person name="Engels R."/>
            <person name="Montgomery P."/>
            <person name="Pearson M."/>
            <person name="Howarth C."/>
            <person name="Larson L."/>
            <person name="Luoma S."/>
            <person name="White J."/>
            <person name="O'Leary S."/>
            <person name="Kodira C.D."/>
            <person name="Zeng Q."/>
            <person name="Yandava C."/>
            <person name="Alvarado L."/>
            <person name="Pratt S."/>
            <person name="Kruglyak L."/>
        </authorList>
    </citation>
    <scope>NUCLEOTIDE SEQUENCE [LARGE SCALE GENOMIC DNA]</scope>
    <source>
        <strain>RM11-1a</strain>
    </source>
</reference>
<keyword id="KW-0472">Membrane</keyword>
<keyword id="KW-0496">Mitochondrion</keyword>
<keyword id="KW-0809">Transit peptide</keyword>
<keyword id="KW-0812">Transmembrane</keyword>
<keyword id="KW-1133">Transmembrane helix</keyword>
<evidence type="ECO:0000255" key="1"/>
<evidence type="ECO:0000305" key="2"/>
<organism>
    <name type="scientific">Saccharomyces cerevisiae (strain RM11-1a)</name>
    <name type="common">Baker's yeast</name>
    <dbReference type="NCBI Taxonomy" id="285006"/>
    <lineage>
        <taxon>Eukaryota</taxon>
        <taxon>Fungi</taxon>
        <taxon>Dikarya</taxon>
        <taxon>Ascomycota</taxon>
        <taxon>Saccharomycotina</taxon>
        <taxon>Saccharomycetes</taxon>
        <taxon>Saccharomycetales</taxon>
        <taxon>Saccharomycetaceae</taxon>
        <taxon>Saccharomyces</taxon>
    </lineage>
</organism>
<name>AIM39_YEAS1</name>
<comment type="subcellular location">
    <subcellularLocation>
        <location evidence="2">Mitochondrion membrane</location>
        <topology evidence="2">Single-pass membrane protein</topology>
    </subcellularLocation>
</comment>
<comment type="similarity">
    <text evidence="2">Belongs to the AIM39 family.</text>
</comment>
<gene>
    <name type="primary">AIM39</name>
    <name type="ORF">SCRG_01350</name>
</gene>
<sequence length="395" mass="45853">MWGLCKNHFPSNKIQVQERNKALKPKKSGSEHKTKQLFPVFNCKKKEKGVMIRFAILRNANTSLLSARSICLFTQAPTYCHVRLNTLNKSITTKRNSLTESKRHVHDGKHFFTTPHQQQQTKLGEIEEGHSPNIKGEDLRSIGQAITHQRNKRRKQIWSAIFGGIFGVILGYSLIYRVIYLKEQSFLPLFPSSKIRKLSTRDLKKVDVNQVQKLSKLRVLEILSGHDMIKEQYGVPLLDKDGNSPTLNEFSMWCEDQDPCVTGIVMEPDDKRDSSHTWYRIPFVCKWRITHRPISIRGTIDDLLNRIGLETSDLFEIISPERVYGSFKYEYPLQGDSHALHLWFHGEIELDDDSLIVYNGKYHVDVKLQEIDLFRREKNGQLIQYVLYKNEAGDK</sequence>
<accession>B3LJ06</accession>
<protein>
    <recommendedName>
        <fullName>Altered inheritance of mitochondria protein 39, mitochondrial</fullName>
    </recommendedName>
</protein>
<feature type="transit peptide" description="Mitochondrion" evidence="1">
    <location>
        <begin position="1"/>
        <end status="unknown"/>
    </location>
</feature>
<feature type="chain" id="PRO_0000399847" description="Altered inheritance of mitochondria protein 39, mitochondrial">
    <location>
        <begin status="unknown"/>
        <end position="395"/>
    </location>
</feature>
<feature type="transmembrane region" description="Helical" evidence="1">
    <location>
        <begin position="156"/>
        <end position="176"/>
    </location>
</feature>
<proteinExistence type="inferred from homology"/>
<dbReference type="EMBL" id="CH408045">
    <property type="protein sequence ID" value="EDV10559.1"/>
    <property type="molecule type" value="Genomic_DNA"/>
</dbReference>
<dbReference type="SMR" id="B3LJ06"/>
<dbReference type="HOGENOM" id="CLU_058942_0_0_1"/>
<dbReference type="OrthoDB" id="30198at4893"/>
<dbReference type="Proteomes" id="UP000008335">
    <property type="component" value="Unassembled WGS sequence"/>
</dbReference>
<dbReference type="GO" id="GO:0031966">
    <property type="term" value="C:mitochondrial membrane"/>
    <property type="evidence" value="ECO:0007669"/>
    <property type="project" value="UniProtKB-SubCell"/>
</dbReference>